<keyword id="KW-1185">Reference proteome</keyword>
<keyword id="KW-0687">Ribonucleoprotein</keyword>
<keyword id="KW-0689">Ribosomal protein</keyword>
<keyword id="KW-0694">RNA-binding</keyword>
<keyword id="KW-0699">rRNA-binding</keyword>
<organism>
    <name type="scientific">Hyperthermus butylicus (strain DSM 5456 / JCM 9403 / PLM1-5)</name>
    <dbReference type="NCBI Taxonomy" id="415426"/>
    <lineage>
        <taxon>Archaea</taxon>
        <taxon>Thermoproteota</taxon>
        <taxon>Thermoprotei</taxon>
        <taxon>Desulfurococcales</taxon>
        <taxon>Pyrodictiaceae</taxon>
        <taxon>Hyperthermus</taxon>
    </lineage>
</organism>
<feature type="chain" id="PRO_0000310045" description="Large ribosomal subunit protein uL2">
    <location>
        <begin position="1"/>
        <end position="238"/>
    </location>
</feature>
<feature type="region of interest" description="Disordered" evidence="2">
    <location>
        <begin position="198"/>
        <end position="238"/>
    </location>
</feature>
<feature type="compositionally biased region" description="Polar residues" evidence="2">
    <location>
        <begin position="206"/>
        <end position="217"/>
    </location>
</feature>
<dbReference type="EMBL" id="CP000493">
    <property type="protein sequence ID" value="ABM81123.1"/>
    <property type="molecule type" value="Genomic_DNA"/>
</dbReference>
<dbReference type="RefSeq" id="WP_011822441.1">
    <property type="nucleotide sequence ID" value="NC_008818.1"/>
</dbReference>
<dbReference type="SMR" id="A2BMB2"/>
<dbReference type="STRING" id="415426.Hbut_1293"/>
<dbReference type="EnsemblBacteria" id="ABM81123">
    <property type="protein sequence ID" value="ABM81123"/>
    <property type="gene ID" value="Hbut_1293"/>
</dbReference>
<dbReference type="GeneID" id="4781511"/>
<dbReference type="KEGG" id="hbu:Hbut_1293"/>
<dbReference type="eggNOG" id="arCOG04067">
    <property type="taxonomic scope" value="Archaea"/>
</dbReference>
<dbReference type="HOGENOM" id="CLU_036235_0_3_2"/>
<dbReference type="OrthoDB" id="5987at2157"/>
<dbReference type="Proteomes" id="UP000002593">
    <property type="component" value="Chromosome"/>
</dbReference>
<dbReference type="GO" id="GO:0022625">
    <property type="term" value="C:cytosolic large ribosomal subunit"/>
    <property type="evidence" value="ECO:0007669"/>
    <property type="project" value="TreeGrafter"/>
</dbReference>
<dbReference type="GO" id="GO:0019843">
    <property type="term" value="F:rRNA binding"/>
    <property type="evidence" value="ECO:0007669"/>
    <property type="project" value="UniProtKB-UniRule"/>
</dbReference>
<dbReference type="GO" id="GO:0003735">
    <property type="term" value="F:structural constituent of ribosome"/>
    <property type="evidence" value="ECO:0007669"/>
    <property type="project" value="InterPro"/>
</dbReference>
<dbReference type="GO" id="GO:0002181">
    <property type="term" value="P:cytoplasmic translation"/>
    <property type="evidence" value="ECO:0007669"/>
    <property type="project" value="TreeGrafter"/>
</dbReference>
<dbReference type="FunFam" id="2.30.30.30:FF:000001">
    <property type="entry name" value="50S ribosomal protein L2"/>
    <property type="match status" value="1"/>
</dbReference>
<dbReference type="FunFam" id="4.10.950.10:FF:000002">
    <property type="entry name" value="60S ribosomal protein L2"/>
    <property type="match status" value="1"/>
</dbReference>
<dbReference type="Gene3D" id="2.30.30.30">
    <property type="match status" value="1"/>
</dbReference>
<dbReference type="Gene3D" id="2.40.50.140">
    <property type="entry name" value="Nucleic acid-binding proteins"/>
    <property type="match status" value="1"/>
</dbReference>
<dbReference type="Gene3D" id="4.10.950.10">
    <property type="entry name" value="Ribosomal protein L2, domain 3"/>
    <property type="match status" value="1"/>
</dbReference>
<dbReference type="HAMAP" id="MF_01320_A">
    <property type="entry name" value="Ribosomal_uL2_A"/>
    <property type="match status" value="1"/>
</dbReference>
<dbReference type="InterPro" id="IPR012340">
    <property type="entry name" value="NA-bd_OB-fold"/>
</dbReference>
<dbReference type="InterPro" id="IPR014722">
    <property type="entry name" value="Rib_uL2_dom2"/>
</dbReference>
<dbReference type="InterPro" id="IPR002171">
    <property type="entry name" value="Ribosomal_uL2"/>
</dbReference>
<dbReference type="InterPro" id="IPR023672">
    <property type="entry name" value="Ribosomal_uL2_arc_euk"/>
</dbReference>
<dbReference type="InterPro" id="IPR022669">
    <property type="entry name" value="Ribosomal_uL2_C"/>
</dbReference>
<dbReference type="InterPro" id="IPR014726">
    <property type="entry name" value="Ribosomal_uL2_dom3"/>
</dbReference>
<dbReference type="InterPro" id="IPR022666">
    <property type="entry name" value="Ribosomal_uL2_RNA-bd_dom"/>
</dbReference>
<dbReference type="InterPro" id="IPR008991">
    <property type="entry name" value="Translation_prot_SH3-like_sf"/>
</dbReference>
<dbReference type="NCBIfam" id="NF007180">
    <property type="entry name" value="PRK09612.1"/>
    <property type="match status" value="1"/>
</dbReference>
<dbReference type="PANTHER" id="PTHR13691:SF16">
    <property type="entry name" value="LARGE RIBOSOMAL SUBUNIT PROTEIN UL2"/>
    <property type="match status" value="1"/>
</dbReference>
<dbReference type="PANTHER" id="PTHR13691">
    <property type="entry name" value="RIBOSOMAL PROTEIN L2"/>
    <property type="match status" value="1"/>
</dbReference>
<dbReference type="Pfam" id="PF00181">
    <property type="entry name" value="Ribosomal_L2"/>
    <property type="match status" value="1"/>
</dbReference>
<dbReference type="Pfam" id="PF03947">
    <property type="entry name" value="Ribosomal_L2_C"/>
    <property type="match status" value="1"/>
</dbReference>
<dbReference type="PIRSF" id="PIRSF002158">
    <property type="entry name" value="Ribosomal_L2"/>
    <property type="match status" value="1"/>
</dbReference>
<dbReference type="SMART" id="SM01383">
    <property type="entry name" value="Ribosomal_L2"/>
    <property type="match status" value="1"/>
</dbReference>
<dbReference type="SMART" id="SM01382">
    <property type="entry name" value="Ribosomal_L2_C"/>
    <property type="match status" value="1"/>
</dbReference>
<dbReference type="SUPFAM" id="SSF50249">
    <property type="entry name" value="Nucleic acid-binding proteins"/>
    <property type="match status" value="1"/>
</dbReference>
<dbReference type="SUPFAM" id="SSF50104">
    <property type="entry name" value="Translation proteins SH3-like domain"/>
    <property type="match status" value="1"/>
</dbReference>
<protein>
    <recommendedName>
        <fullName evidence="1">Large ribosomal subunit protein uL2</fullName>
    </recommendedName>
    <alternativeName>
        <fullName evidence="3">50S ribosomal protein L2</fullName>
    </alternativeName>
</protein>
<sequence length="238" mass="25796">MGKRLIVQRRGKGSPLYRSRPWLHPAPARYPPLTPVTLRGRVVELVHDPGRWVPLAHIVLENGDEFYIPAAEGMYVGQIIEIGPDARPVNGNILPVGKIPEGTQVYNIEIRPGDGGKLVRAYGTYAIILGRSGNKTIIQLPSGKVKEVPNDARATIGIVAGAGRLEKPLLKAGAAYYKWSAKPHVWPRVRGVAMNAVNHPHGGGSHQSPSFPTTVSRNAPPGRKVGHIAARSTGRRKR</sequence>
<comment type="function">
    <text evidence="1">One of the primary rRNA binding proteins. Required for association of the 30S and 50S subunits to form the 70S ribosome, for tRNA binding and peptide bond formation. It has been suggested to have peptidyltransferase activity; this is somewhat controversial. Makes several contacts with the 16S rRNA in the 70S ribosome.</text>
</comment>
<comment type="subunit">
    <text evidence="1">Part of the 50S ribosomal subunit. Forms a bridge to the 30S subunit in the 70S ribosome.</text>
</comment>
<comment type="similarity">
    <text evidence="1">Belongs to the universal ribosomal protein uL2 family.</text>
</comment>
<evidence type="ECO:0000255" key="1">
    <source>
        <dbReference type="HAMAP-Rule" id="MF_01320"/>
    </source>
</evidence>
<evidence type="ECO:0000256" key="2">
    <source>
        <dbReference type="SAM" id="MobiDB-lite"/>
    </source>
</evidence>
<evidence type="ECO:0000305" key="3"/>
<gene>
    <name evidence="1" type="primary">rpl2</name>
    <name type="ordered locus">Hbut_1293</name>
</gene>
<name>RL2_HYPBU</name>
<proteinExistence type="inferred from homology"/>
<accession>A2BMB2</accession>
<reference key="1">
    <citation type="journal article" date="2007" name="Archaea">
        <title>The genome of Hyperthermus butylicus: a sulfur-reducing, peptide fermenting, neutrophilic Crenarchaeote growing up to 108 degrees C.</title>
        <authorList>
            <person name="Bruegger K."/>
            <person name="Chen L."/>
            <person name="Stark M."/>
            <person name="Zibat A."/>
            <person name="Redder P."/>
            <person name="Ruepp A."/>
            <person name="Awayez M."/>
            <person name="She Q."/>
            <person name="Garrett R.A."/>
            <person name="Klenk H.-P."/>
        </authorList>
    </citation>
    <scope>NUCLEOTIDE SEQUENCE [LARGE SCALE GENOMIC DNA]</scope>
    <source>
        <strain>DSM 5456 / JCM 9403 / PLM1-5</strain>
    </source>
</reference>